<name>UGPE_BRUAB</name>
<feature type="chain" id="PRO_0000290137" description="sn-glycerol-3-phosphate transport system permease protein UgpE">
    <location>
        <begin position="1"/>
        <end position="282"/>
    </location>
</feature>
<feature type="transmembrane region" description="Helical" evidence="3">
    <location>
        <begin position="14"/>
        <end position="34"/>
    </location>
</feature>
<feature type="transmembrane region" description="Helical" evidence="3">
    <location>
        <begin position="86"/>
        <end position="106"/>
    </location>
</feature>
<feature type="transmembrane region" description="Helical" evidence="3">
    <location>
        <begin position="112"/>
        <end position="132"/>
    </location>
</feature>
<feature type="transmembrane region" description="Helical" evidence="3">
    <location>
        <begin position="146"/>
        <end position="168"/>
    </location>
</feature>
<feature type="transmembrane region" description="Helical" evidence="3">
    <location>
        <begin position="201"/>
        <end position="221"/>
    </location>
</feature>
<feature type="transmembrane region" description="Helical" evidence="3">
    <location>
        <begin position="248"/>
        <end position="268"/>
    </location>
</feature>
<feature type="domain" description="ABC transmembrane type-1" evidence="3">
    <location>
        <begin position="78"/>
        <end position="269"/>
    </location>
</feature>
<gene>
    <name type="primary">ugpE</name>
    <name type="ordered locus">BruAb2_0569</name>
</gene>
<dbReference type="EMBL" id="AE017224">
    <property type="protein sequence ID" value="AAX75986.1"/>
    <property type="molecule type" value="Genomic_DNA"/>
</dbReference>
<dbReference type="RefSeq" id="WP_002968959.1">
    <property type="nucleotide sequence ID" value="NC_006933.1"/>
</dbReference>
<dbReference type="SMR" id="Q578E8"/>
<dbReference type="EnsemblBacteria" id="AAX75986">
    <property type="protein sequence ID" value="AAX75986"/>
    <property type="gene ID" value="BruAb2_0569"/>
</dbReference>
<dbReference type="GeneID" id="93015522"/>
<dbReference type="KEGG" id="bmb:BruAb2_0569"/>
<dbReference type="HOGENOM" id="CLU_016047_1_1_5"/>
<dbReference type="Proteomes" id="UP000000540">
    <property type="component" value="Chromosome II"/>
</dbReference>
<dbReference type="GO" id="GO:0005886">
    <property type="term" value="C:plasma membrane"/>
    <property type="evidence" value="ECO:0007669"/>
    <property type="project" value="UniProtKB-SubCell"/>
</dbReference>
<dbReference type="GO" id="GO:0055085">
    <property type="term" value="P:transmembrane transport"/>
    <property type="evidence" value="ECO:0007669"/>
    <property type="project" value="InterPro"/>
</dbReference>
<dbReference type="CDD" id="cd06261">
    <property type="entry name" value="TM_PBP2"/>
    <property type="match status" value="1"/>
</dbReference>
<dbReference type="Gene3D" id="1.10.3720.10">
    <property type="entry name" value="MetI-like"/>
    <property type="match status" value="1"/>
</dbReference>
<dbReference type="InterPro" id="IPR000515">
    <property type="entry name" value="MetI-like"/>
</dbReference>
<dbReference type="InterPro" id="IPR035906">
    <property type="entry name" value="MetI-like_sf"/>
</dbReference>
<dbReference type="NCBIfam" id="NF008210">
    <property type="entry name" value="PRK10973.1"/>
    <property type="match status" value="1"/>
</dbReference>
<dbReference type="PANTHER" id="PTHR43744">
    <property type="entry name" value="ABC TRANSPORTER PERMEASE PROTEIN MG189-RELATED-RELATED"/>
    <property type="match status" value="1"/>
</dbReference>
<dbReference type="PANTHER" id="PTHR43744:SF8">
    <property type="entry name" value="SN-GLYCEROL-3-PHOSPHATE TRANSPORT SYSTEM PERMEASE PROTEIN UGPE"/>
    <property type="match status" value="1"/>
</dbReference>
<dbReference type="Pfam" id="PF00528">
    <property type="entry name" value="BPD_transp_1"/>
    <property type="match status" value="1"/>
</dbReference>
<dbReference type="SUPFAM" id="SSF161098">
    <property type="entry name" value="MetI-like"/>
    <property type="match status" value="1"/>
</dbReference>
<dbReference type="PROSITE" id="PS50928">
    <property type="entry name" value="ABC_TM1"/>
    <property type="match status" value="1"/>
</dbReference>
<proteinExistence type="inferred from homology"/>
<evidence type="ECO:0000250" key="1">
    <source>
        <dbReference type="UniProtKB" id="P10906"/>
    </source>
</evidence>
<evidence type="ECO:0000255" key="2"/>
<evidence type="ECO:0000255" key="3">
    <source>
        <dbReference type="PROSITE-ProRule" id="PRU00441"/>
    </source>
</evidence>
<evidence type="ECO:0000305" key="4"/>
<keyword id="KW-0997">Cell inner membrane</keyword>
<keyword id="KW-1003">Cell membrane</keyword>
<keyword id="KW-0472">Membrane</keyword>
<keyword id="KW-0812">Transmembrane</keyword>
<keyword id="KW-1133">Transmembrane helix</keyword>
<keyword id="KW-0813">Transport</keyword>
<sequence length="282" mass="32052">MIEQRPVSNLIGHLILILGIIIVAFPIYYTFVASSMTSTQIIRPPISLLPGDHLVENYREAIFGGVERVVGVSLERLLWNSFVVAMAIAVGKIIISFMSAFAIVFFRFPMRMFFFWMIFITLMLPVEVRILPTYKVIVDLGMIDTYAGLTLPLMASATATFLFRQFFLTIPGELVEAARIDNAGPFRFMRDILLPLSKTNIAALFVILFIYGWTQYLWPLLVTNDAKMNTIIIGLRRMVDWADASTPWNYVMVTAILAIIPLILVVVLMQRWFVKGLVETEK</sequence>
<comment type="function">
    <text evidence="1">Part of the ABC transporter complex UgpBAEC involved in sn-glycerol-3-phosphate (G3P) import. Probably responsible for the translocation of the substrate across the membrane.</text>
</comment>
<comment type="subunit">
    <text evidence="1">The complex is composed of two ATP-binding proteins (UgpC), two transmembrane proteins (UgpA and UgpE) and a solute-binding protein (UgpB).</text>
</comment>
<comment type="subcellular location">
    <subcellularLocation>
        <location evidence="1">Cell inner membrane</location>
        <topology evidence="2">Multi-pass membrane protein</topology>
    </subcellularLocation>
</comment>
<comment type="similarity">
    <text evidence="4">Belongs to the binding-protein-dependent transport system permease family.</text>
</comment>
<accession>Q578E8</accession>
<reference key="1">
    <citation type="journal article" date="2005" name="J. Bacteriol.">
        <title>Completion of the genome sequence of Brucella abortus and comparison to the highly similar genomes of Brucella melitensis and Brucella suis.</title>
        <authorList>
            <person name="Halling S.M."/>
            <person name="Peterson-Burch B.D."/>
            <person name="Bricker B.J."/>
            <person name="Zuerner R.L."/>
            <person name="Qing Z."/>
            <person name="Li L.-L."/>
            <person name="Kapur V."/>
            <person name="Alt D.P."/>
            <person name="Olsen S.C."/>
        </authorList>
    </citation>
    <scope>NUCLEOTIDE SEQUENCE [LARGE SCALE GENOMIC DNA]</scope>
    <source>
        <strain>9-941</strain>
    </source>
</reference>
<organism>
    <name type="scientific">Brucella abortus biovar 1 (strain 9-941)</name>
    <dbReference type="NCBI Taxonomy" id="262698"/>
    <lineage>
        <taxon>Bacteria</taxon>
        <taxon>Pseudomonadati</taxon>
        <taxon>Pseudomonadota</taxon>
        <taxon>Alphaproteobacteria</taxon>
        <taxon>Hyphomicrobiales</taxon>
        <taxon>Brucellaceae</taxon>
        <taxon>Brucella/Ochrobactrum group</taxon>
        <taxon>Brucella</taxon>
    </lineage>
</organism>
<protein>
    <recommendedName>
        <fullName evidence="1">sn-glycerol-3-phosphate transport system permease protein UgpE</fullName>
    </recommendedName>
</protein>